<reference key="1">
    <citation type="journal article" date="2008" name="Genome Res.">
        <title>The genome of Pelotomaculum thermopropionicum reveals niche-associated evolution in anaerobic microbiota.</title>
        <authorList>
            <person name="Kosaka T."/>
            <person name="Kato S."/>
            <person name="Shimoyama T."/>
            <person name="Ishii S."/>
            <person name="Abe T."/>
            <person name="Watanabe K."/>
        </authorList>
    </citation>
    <scope>NUCLEOTIDE SEQUENCE [LARGE SCALE GENOMIC DNA]</scope>
    <source>
        <strain>DSM 13744 / JCM 10971 / SI</strain>
    </source>
</reference>
<comment type="function">
    <text evidence="1">Specifically methylates the pseudouridine at position 1915 (m3Psi1915) in 23S rRNA.</text>
</comment>
<comment type="catalytic activity">
    <reaction evidence="1">
        <text>pseudouridine(1915) in 23S rRNA + S-adenosyl-L-methionine = N(3)-methylpseudouridine(1915) in 23S rRNA + S-adenosyl-L-homocysteine + H(+)</text>
        <dbReference type="Rhea" id="RHEA:42752"/>
        <dbReference type="Rhea" id="RHEA-COMP:10221"/>
        <dbReference type="Rhea" id="RHEA-COMP:10222"/>
        <dbReference type="ChEBI" id="CHEBI:15378"/>
        <dbReference type="ChEBI" id="CHEBI:57856"/>
        <dbReference type="ChEBI" id="CHEBI:59789"/>
        <dbReference type="ChEBI" id="CHEBI:65314"/>
        <dbReference type="ChEBI" id="CHEBI:74486"/>
        <dbReference type="EC" id="2.1.1.177"/>
    </reaction>
</comment>
<comment type="subunit">
    <text evidence="1">Homodimer.</text>
</comment>
<comment type="subcellular location">
    <subcellularLocation>
        <location evidence="1">Cytoplasm</location>
    </subcellularLocation>
</comment>
<comment type="similarity">
    <text evidence="1">Belongs to the RNA methyltransferase RlmH family.</text>
</comment>
<accession>A5CY81</accession>
<organism>
    <name type="scientific">Pelotomaculum thermopropionicum (strain DSM 13744 / JCM 10971 / SI)</name>
    <dbReference type="NCBI Taxonomy" id="370438"/>
    <lineage>
        <taxon>Bacteria</taxon>
        <taxon>Bacillati</taxon>
        <taxon>Bacillota</taxon>
        <taxon>Clostridia</taxon>
        <taxon>Eubacteriales</taxon>
        <taxon>Desulfotomaculaceae</taxon>
        <taxon>Pelotomaculum</taxon>
    </lineage>
</organism>
<sequence>MFHITVLAVGRLKEKYLTEGAAEYLKRLSAYAKISVVEVEDGSLPENPAAAGGEKVKEKEGERLLGRLRPGTFLIALDVRGKMHSSEEMAEILNRLALSGRSDITFAIGGALGLSEKVLERAAMRLSFSRMTFPHQLVRLILLEQLYRWFKIARGEPYHY</sequence>
<keyword id="KW-0963">Cytoplasm</keyword>
<keyword id="KW-0489">Methyltransferase</keyword>
<keyword id="KW-1185">Reference proteome</keyword>
<keyword id="KW-0698">rRNA processing</keyword>
<keyword id="KW-0949">S-adenosyl-L-methionine</keyword>
<keyword id="KW-0808">Transferase</keyword>
<evidence type="ECO:0000255" key="1">
    <source>
        <dbReference type="HAMAP-Rule" id="MF_00658"/>
    </source>
</evidence>
<name>RLMH_PELTS</name>
<protein>
    <recommendedName>
        <fullName evidence="1">Ribosomal RNA large subunit methyltransferase H</fullName>
        <ecNumber evidence="1">2.1.1.177</ecNumber>
    </recommendedName>
    <alternativeName>
        <fullName evidence="1">23S rRNA (pseudouridine1915-N3)-methyltransferase</fullName>
    </alternativeName>
    <alternativeName>
        <fullName evidence="1">23S rRNA m3Psi1915 methyltransferase</fullName>
    </alternativeName>
    <alternativeName>
        <fullName evidence="1">rRNA (pseudouridine-N3-)-methyltransferase RlmH</fullName>
    </alternativeName>
</protein>
<dbReference type="EC" id="2.1.1.177" evidence="1"/>
<dbReference type="EMBL" id="AP009389">
    <property type="protein sequence ID" value="BAF61038.1"/>
    <property type="molecule type" value="Genomic_DNA"/>
</dbReference>
<dbReference type="SMR" id="A5CY81"/>
<dbReference type="STRING" id="370438.PTH_2857"/>
<dbReference type="KEGG" id="pth:PTH_2857"/>
<dbReference type="eggNOG" id="COG1576">
    <property type="taxonomic scope" value="Bacteria"/>
</dbReference>
<dbReference type="HOGENOM" id="CLU_100552_0_0_9"/>
<dbReference type="Proteomes" id="UP000006556">
    <property type="component" value="Chromosome"/>
</dbReference>
<dbReference type="GO" id="GO:0005737">
    <property type="term" value="C:cytoplasm"/>
    <property type="evidence" value="ECO:0007669"/>
    <property type="project" value="UniProtKB-SubCell"/>
</dbReference>
<dbReference type="GO" id="GO:0070038">
    <property type="term" value="F:rRNA (pseudouridine-N3-)-methyltransferase activity"/>
    <property type="evidence" value="ECO:0007669"/>
    <property type="project" value="UniProtKB-UniRule"/>
</dbReference>
<dbReference type="CDD" id="cd18081">
    <property type="entry name" value="RlmH-like"/>
    <property type="match status" value="1"/>
</dbReference>
<dbReference type="Gene3D" id="3.40.1280.10">
    <property type="match status" value="1"/>
</dbReference>
<dbReference type="HAMAP" id="MF_00658">
    <property type="entry name" value="23SrRNA_methyltr_H"/>
    <property type="match status" value="1"/>
</dbReference>
<dbReference type="InterPro" id="IPR029028">
    <property type="entry name" value="Alpha/beta_knot_MTases"/>
</dbReference>
<dbReference type="InterPro" id="IPR003742">
    <property type="entry name" value="RlmH-like"/>
</dbReference>
<dbReference type="InterPro" id="IPR029026">
    <property type="entry name" value="tRNA_m1G_MTases_N"/>
</dbReference>
<dbReference type="NCBIfam" id="NF000985">
    <property type="entry name" value="PRK00103.1-3"/>
    <property type="match status" value="1"/>
</dbReference>
<dbReference type="NCBIfam" id="TIGR00246">
    <property type="entry name" value="tRNA_RlmH_YbeA"/>
    <property type="match status" value="1"/>
</dbReference>
<dbReference type="PANTHER" id="PTHR33603">
    <property type="entry name" value="METHYLTRANSFERASE"/>
    <property type="match status" value="1"/>
</dbReference>
<dbReference type="PANTHER" id="PTHR33603:SF1">
    <property type="entry name" value="RIBOSOMAL RNA LARGE SUBUNIT METHYLTRANSFERASE H"/>
    <property type="match status" value="1"/>
</dbReference>
<dbReference type="Pfam" id="PF02590">
    <property type="entry name" value="SPOUT_MTase"/>
    <property type="match status" value="1"/>
</dbReference>
<dbReference type="PIRSF" id="PIRSF004505">
    <property type="entry name" value="MT_bac"/>
    <property type="match status" value="1"/>
</dbReference>
<dbReference type="SUPFAM" id="SSF75217">
    <property type="entry name" value="alpha/beta knot"/>
    <property type="match status" value="1"/>
</dbReference>
<feature type="chain" id="PRO_0000366632" description="Ribosomal RNA large subunit methyltransferase H">
    <location>
        <begin position="1"/>
        <end position="160"/>
    </location>
</feature>
<feature type="binding site" evidence="1">
    <location>
        <position position="77"/>
    </location>
    <ligand>
        <name>S-adenosyl-L-methionine</name>
        <dbReference type="ChEBI" id="CHEBI:59789"/>
    </ligand>
</feature>
<feature type="binding site" evidence="1">
    <location>
        <position position="109"/>
    </location>
    <ligand>
        <name>S-adenosyl-L-methionine</name>
        <dbReference type="ChEBI" id="CHEBI:59789"/>
    </ligand>
</feature>
<feature type="binding site" evidence="1">
    <location>
        <begin position="128"/>
        <end position="133"/>
    </location>
    <ligand>
        <name>S-adenosyl-L-methionine</name>
        <dbReference type="ChEBI" id="CHEBI:59789"/>
    </ligand>
</feature>
<gene>
    <name evidence="1" type="primary">rlmH</name>
    <name type="ordered locus">PTH_2857</name>
</gene>
<proteinExistence type="inferred from homology"/>